<organism>
    <name type="scientific">Staphylococcus carnosus (strain TM300)</name>
    <dbReference type="NCBI Taxonomy" id="396513"/>
    <lineage>
        <taxon>Bacteria</taxon>
        <taxon>Bacillati</taxon>
        <taxon>Bacillota</taxon>
        <taxon>Bacilli</taxon>
        <taxon>Bacillales</taxon>
        <taxon>Staphylococcaceae</taxon>
        <taxon>Staphylococcus</taxon>
    </lineage>
</organism>
<proteinExistence type="inferred from homology"/>
<protein>
    <recommendedName>
        <fullName evidence="1">Acetyl-coenzyme A carboxylase carboxyl transferase subunit beta</fullName>
        <shortName evidence="1">ACCase subunit beta</shortName>
        <shortName evidence="1">Acetyl-CoA carboxylase carboxyltransferase subunit beta</shortName>
        <ecNumber evidence="1">2.1.3.15</ecNumber>
    </recommendedName>
</protein>
<keyword id="KW-0067">ATP-binding</keyword>
<keyword id="KW-0963">Cytoplasm</keyword>
<keyword id="KW-0275">Fatty acid biosynthesis</keyword>
<keyword id="KW-0276">Fatty acid metabolism</keyword>
<keyword id="KW-0444">Lipid biosynthesis</keyword>
<keyword id="KW-0443">Lipid metabolism</keyword>
<keyword id="KW-0479">Metal-binding</keyword>
<keyword id="KW-0547">Nucleotide-binding</keyword>
<keyword id="KW-1185">Reference proteome</keyword>
<keyword id="KW-0808">Transferase</keyword>
<keyword id="KW-0862">Zinc</keyword>
<keyword id="KW-0863">Zinc-finger</keyword>
<gene>
    <name evidence="1" type="primary">accD</name>
    <name type="ordered locus">Sca_1306</name>
</gene>
<dbReference type="EC" id="2.1.3.15" evidence="1"/>
<dbReference type="EMBL" id="AM295250">
    <property type="protein sequence ID" value="CAL28211.1"/>
    <property type="molecule type" value="Genomic_DNA"/>
</dbReference>
<dbReference type="RefSeq" id="WP_015900551.1">
    <property type="nucleotide sequence ID" value="NC_012121.1"/>
</dbReference>
<dbReference type="SMR" id="B9DN96"/>
<dbReference type="GeneID" id="93793728"/>
<dbReference type="KEGG" id="sca:SCA_1306"/>
<dbReference type="eggNOG" id="COG0777">
    <property type="taxonomic scope" value="Bacteria"/>
</dbReference>
<dbReference type="HOGENOM" id="CLU_015486_1_1_9"/>
<dbReference type="OrthoDB" id="9772975at2"/>
<dbReference type="BioCyc" id="SCAR396513:SCA_RS06505-MONOMER"/>
<dbReference type="UniPathway" id="UPA00655">
    <property type="reaction ID" value="UER00711"/>
</dbReference>
<dbReference type="Proteomes" id="UP000000444">
    <property type="component" value="Chromosome"/>
</dbReference>
<dbReference type="GO" id="GO:0009317">
    <property type="term" value="C:acetyl-CoA carboxylase complex"/>
    <property type="evidence" value="ECO:0007669"/>
    <property type="project" value="InterPro"/>
</dbReference>
<dbReference type="GO" id="GO:0003989">
    <property type="term" value="F:acetyl-CoA carboxylase activity"/>
    <property type="evidence" value="ECO:0007669"/>
    <property type="project" value="InterPro"/>
</dbReference>
<dbReference type="GO" id="GO:0005524">
    <property type="term" value="F:ATP binding"/>
    <property type="evidence" value="ECO:0007669"/>
    <property type="project" value="UniProtKB-KW"/>
</dbReference>
<dbReference type="GO" id="GO:0016743">
    <property type="term" value="F:carboxyl- or carbamoyltransferase activity"/>
    <property type="evidence" value="ECO:0007669"/>
    <property type="project" value="UniProtKB-UniRule"/>
</dbReference>
<dbReference type="GO" id="GO:0008270">
    <property type="term" value="F:zinc ion binding"/>
    <property type="evidence" value="ECO:0007669"/>
    <property type="project" value="UniProtKB-UniRule"/>
</dbReference>
<dbReference type="GO" id="GO:0006633">
    <property type="term" value="P:fatty acid biosynthetic process"/>
    <property type="evidence" value="ECO:0007669"/>
    <property type="project" value="UniProtKB-KW"/>
</dbReference>
<dbReference type="GO" id="GO:2001295">
    <property type="term" value="P:malonyl-CoA biosynthetic process"/>
    <property type="evidence" value="ECO:0007669"/>
    <property type="project" value="UniProtKB-UniRule"/>
</dbReference>
<dbReference type="Gene3D" id="3.90.226.10">
    <property type="entry name" value="2-enoyl-CoA Hydratase, Chain A, domain 1"/>
    <property type="match status" value="1"/>
</dbReference>
<dbReference type="HAMAP" id="MF_01395">
    <property type="entry name" value="AcetylCoA_CT_beta"/>
    <property type="match status" value="1"/>
</dbReference>
<dbReference type="InterPro" id="IPR034733">
    <property type="entry name" value="AcCoA_carboxyl_beta"/>
</dbReference>
<dbReference type="InterPro" id="IPR000438">
    <property type="entry name" value="Acetyl_CoA_COase_Trfase_b_su"/>
</dbReference>
<dbReference type="InterPro" id="IPR029045">
    <property type="entry name" value="ClpP/crotonase-like_dom_sf"/>
</dbReference>
<dbReference type="InterPro" id="IPR011762">
    <property type="entry name" value="COA_CT_N"/>
</dbReference>
<dbReference type="InterPro" id="IPR041010">
    <property type="entry name" value="Znf-ACC"/>
</dbReference>
<dbReference type="NCBIfam" id="TIGR00515">
    <property type="entry name" value="accD"/>
    <property type="match status" value="1"/>
</dbReference>
<dbReference type="PANTHER" id="PTHR42995">
    <property type="entry name" value="ACETYL-COENZYME A CARBOXYLASE CARBOXYL TRANSFERASE SUBUNIT BETA, CHLOROPLASTIC"/>
    <property type="match status" value="1"/>
</dbReference>
<dbReference type="PANTHER" id="PTHR42995:SF5">
    <property type="entry name" value="ACETYL-COENZYME A CARBOXYLASE CARBOXYL TRANSFERASE SUBUNIT BETA, CHLOROPLASTIC"/>
    <property type="match status" value="1"/>
</dbReference>
<dbReference type="Pfam" id="PF01039">
    <property type="entry name" value="Carboxyl_trans"/>
    <property type="match status" value="1"/>
</dbReference>
<dbReference type="Pfam" id="PF17848">
    <property type="entry name" value="Zn_ribbon_ACC"/>
    <property type="match status" value="1"/>
</dbReference>
<dbReference type="PRINTS" id="PR01070">
    <property type="entry name" value="ACCCTRFRASEB"/>
</dbReference>
<dbReference type="SUPFAM" id="SSF52096">
    <property type="entry name" value="ClpP/crotonase"/>
    <property type="match status" value="1"/>
</dbReference>
<dbReference type="PROSITE" id="PS50980">
    <property type="entry name" value="COA_CT_NTER"/>
    <property type="match status" value="1"/>
</dbReference>
<name>ACCD_STACT</name>
<feature type="chain" id="PRO_0000389861" description="Acetyl-coenzyme A carboxylase carboxyl transferase subunit beta">
    <location>
        <begin position="1"/>
        <end position="290"/>
    </location>
</feature>
<feature type="domain" description="CoA carboxyltransferase N-terminal" evidence="2">
    <location>
        <begin position="30"/>
        <end position="290"/>
    </location>
</feature>
<feature type="zinc finger region" description="C4-type" evidence="1">
    <location>
        <begin position="34"/>
        <end position="56"/>
    </location>
</feature>
<feature type="binding site" evidence="1">
    <location>
        <position position="34"/>
    </location>
    <ligand>
        <name>Zn(2+)</name>
        <dbReference type="ChEBI" id="CHEBI:29105"/>
    </ligand>
</feature>
<feature type="binding site" evidence="1">
    <location>
        <position position="37"/>
    </location>
    <ligand>
        <name>Zn(2+)</name>
        <dbReference type="ChEBI" id="CHEBI:29105"/>
    </ligand>
</feature>
<feature type="binding site" evidence="1">
    <location>
        <position position="53"/>
    </location>
    <ligand>
        <name>Zn(2+)</name>
        <dbReference type="ChEBI" id="CHEBI:29105"/>
    </ligand>
</feature>
<feature type="binding site" evidence="1">
    <location>
        <position position="56"/>
    </location>
    <ligand>
        <name>Zn(2+)</name>
        <dbReference type="ChEBI" id="CHEBI:29105"/>
    </ligand>
</feature>
<sequence length="290" mass="32235">MFKDFFNRGSKKKKYVTVQDSKQNDVPTGIMTKCPKCKKIMYTKELSENLNVCFNCDHHLSLTAYKRIEAISDEGTFKEFDKGMTSANPLDFPGYEEKIKKDQEKTGLDEAVVTGTAELGGIEYGVAVMDARFRMGSMGSVVGEKICRIIDYCTEHRLPFILFSASGGARMQEGIISLMQMGKTSVSLKRHSDAGLLYISYITNPTTGGVSASFASVGDINLSEPKALIGFAGRRVIEQTINEKLPDDFQTAEFLLEHGQLDKVVHRKEMRSTLESILKMHAGQEVNKDA</sequence>
<reference key="1">
    <citation type="journal article" date="2009" name="Appl. Environ. Microbiol.">
        <title>Genome analysis of the meat starter culture bacterium Staphylococcus carnosus TM300.</title>
        <authorList>
            <person name="Rosenstein R."/>
            <person name="Nerz C."/>
            <person name="Biswas L."/>
            <person name="Resch A."/>
            <person name="Raddatz G."/>
            <person name="Schuster S.C."/>
            <person name="Goetz F."/>
        </authorList>
    </citation>
    <scope>NUCLEOTIDE SEQUENCE [LARGE SCALE GENOMIC DNA]</scope>
    <source>
        <strain>TM300</strain>
    </source>
</reference>
<evidence type="ECO:0000255" key="1">
    <source>
        <dbReference type="HAMAP-Rule" id="MF_01395"/>
    </source>
</evidence>
<evidence type="ECO:0000255" key="2">
    <source>
        <dbReference type="PROSITE-ProRule" id="PRU01136"/>
    </source>
</evidence>
<comment type="function">
    <text evidence="1">Component of the acetyl coenzyme A carboxylase (ACC) complex. Biotin carboxylase (BC) catalyzes the carboxylation of biotin on its carrier protein (BCCP) and then the CO(2) group is transferred by the transcarboxylase to acetyl-CoA to form malonyl-CoA.</text>
</comment>
<comment type="catalytic activity">
    <reaction evidence="1">
        <text>N(6)-carboxybiotinyl-L-lysyl-[protein] + acetyl-CoA = N(6)-biotinyl-L-lysyl-[protein] + malonyl-CoA</text>
        <dbReference type="Rhea" id="RHEA:54728"/>
        <dbReference type="Rhea" id="RHEA-COMP:10505"/>
        <dbReference type="Rhea" id="RHEA-COMP:10506"/>
        <dbReference type="ChEBI" id="CHEBI:57288"/>
        <dbReference type="ChEBI" id="CHEBI:57384"/>
        <dbReference type="ChEBI" id="CHEBI:83144"/>
        <dbReference type="ChEBI" id="CHEBI:83145"/>
        <dbReference type="EC" id="2.1.3.15"/>
    </reaction>
</comment>
<comment type="cofactor">
    <cofactor evidence="1">
        <name>Zn(2+)</name>
        <dbReference type="ChEBI" id="CHEBI:29105"/>
    </cofactor>
    <text evidence="1">Binds 1 zinc ion per subunit.</text>
</comment>
<comment type="pathway">
    <text evidence="1">Lipid metabolism; malonyl-CoA biosynthesis; malonyl-CoA from acetyl-CoA: step 1/1.</text>
</comment>
<comment type="subunit">
    <text evidence="1">Acetyl-CoA carboxylase is a heterohexamer composed of biotin carboxyl carrier protein (AccB), biotin carboxylase (AccC) and two subunits each of ACCase subunit alpha (AccA) and ACCase subunit beta (AccD).</text>
</comment>
<comment type="subcellular location">
    <subcellularLocation>
        <location evidence="1">Cytoplasm</location>
    </subcellularLocation>
</comment>
<comment type="similarity">
    <text evidence="1">Belongs to the AccD/PCCB family.</text>
</comment>
<accession>B9DN96</accession>